<gene>
    <name evidence="1" type="primary">panC</name>
    <name type="ordered locus">CE0115</name>
</gene>
<keyword id="KW-0067">ATP-binding</keyword>
<keyword id="KW-0963">Cytoplasm</keyword>
<keyword id="KW-0436">Ligase</keyword>
<keyword id="KW-0547">Nucleotide-binding</keyword>
<keyword id="KW-0566">Pantothenate biosynthesis</keyword>
<keyword id="KW-1185">Reference proteome</keyword>
<feature type="chain" id="PRO_0000128223" description="Pantothenate synthetase">
    <location>
        <begin position="1"/>
        <end position="287"/>
    </location>
</feature>
<feature type="active site" description="Proton donor" evidence="1">
    <location>
        <position position="37"/>
    </location>
</feature>
<feature type="binding site" evidence="1">
    <location>
        <begin position="30"/>
        <end position="37"/>
    </location>
    <ligand>
        <name>ATP</name>
        <dbReference type="ChEBI" id="CHEBI:30616"/>
    </ligand>
</feature>
<feature type="binding site" evidence="1">
    <location>
        <position position="61"/>
    </location>
    <ligand>
        <name>(R)-pantoate</name>
        <dbReference type="ChEBI" id="CHEBI:15980"/>
    </ligand>
</feature>
<feature type="binding site" evidence="1">
    <location>
        <position position="61"/>
    </location>
    <ligand>
        <name>beta-alanine</name>
        <dbReference type="ChEBI" id="CHEBI:57966"/>
    </ligand>
</feature>
<feature type="binding site" evidence="1">
    <location>
        <begin position="152"/>
        <end position="155"/>
    </location>
    <ligand>
        <name>ATP</name>
        <dbReference type="ChEBI" id="CHEBI:30616"/>
    </ligand>
</feature>
<feature type="binding site" evidence="1">
    <location>
        <position position="158"/>
    </location>
    <ligand>
        <name>(R)-pantoate</name>
        <dbReference type="ChEBI" id="CHEBI:15980"/>
    </ligand>
</feature>
<feature type="binding site" evidence="1">
    <location>
        <position position="181"/>
    </location>
    <ligand>
        <name>ATP</name>
        <dbReference type="ChEBI" id="CHEBI:30616"/>
    </ligand>
</feature>
<feature type="binding site" evidence="1">
    <location>
        <begin position="189"/>
        <end position="192"/>
    </location>
    <ligand>
        <name>ATP</name>
        <dbReference type="ChEBI" id="CHEBI:30616"/>
    </ligand>
</feature>
<protein>
    <recommendedName>
        <fullName evidence="1">Pantothenate synthetase</fullName>
        <shortName evidence="1">PS</shortName>
        <ecNumber evidence="1">6.3.2.1</ecNumber>
    </recommendedName>
    <alternativeName>
        <fullName evidence="1">Pantoate--beta-alanine ligase</fullName>
    </alternativeName>
    <alternativeName>
        <fullName evidence="1">Pantoate-activating enzyme</fullName>
    </alternativeName>
</protein>
<accession>Q8FUA6</accession>
<comment type="function">
    <text evidence="1">Catalyzes the condensation of pantoate with beta-alanine in an ATP-dependent reaction via a pantoyl-adenylate intermediate.</text>
</comment>
<comment type="catalytic activity">
    <reaction evidence="1">
        <text>(R)-pantoate + beta-alanine + ATP = (R)-pantothenate + AMP + diphosphate + H(+)</text>
        <dbReference type="Rhea" id="RHEA:10912"/>
        <dbReference type="ChEBI" id="CHEBI:15378"/>
        <dbReference type="ChEBI" id="CHEBI:15980"/>
        <dbReference type="ChEBI" id="CHEBI:29032"/>
        <dbReference type="ChEBI" id="CHEBI:30616"/>
        <dbReference type="ChEBI" id="CHEBI:33019"/>
        <dbReference type="ChEBI" id="CHEBI:57966"/>
        <dbReference type="ChEBI" id="CHEBI:456215"/>
        <dbReference type="EC" id="6.3.2.1"/>
    </reaction>
</comment>
<comment type="pathway">
    <text evidence="1">Cofactor biosynthesis; (R)-pantothenate biosynthesis; (R)-pantothenate from (R)-pantoate and beta-alanine: step 1/1.</text>
</comment>
<comment type="subunit">
    <text evidence="1">Homodimer.</text>
</comment>
<comment type="subcellular location">
    <subcellularLocation>
        <location evidence="1">Cytoplasm</location>
    </subcellularLocation>
</comment>
<comment type="miscellaneous">
    <text evidence="1">The reaction proceeds by a bi uni uni bi ping pong mechanism.</text>
</comment>
<comment type="similarity">
    <text evidence="1">Belongs to the pantothenate synthetase family.</text>
</comment>
<comment type="sequence caution" evidence="2">
    <conflict type="erroneous initiation">
        <sequence resource="EMBL-CDS" id="BAC16925"/>
    </conflict>
</comment>
<proteinExistence type="inferred from homology"/>
<evidence type="ECO:0000255" key="1">
    <source>
        <dbReference type="HAMAP-Rule" id="MF_00158"/>
    </source>
</evidence>
<evidence type="ECO:0000305" key="2"/>
<sequence length="287" mass="31267">MLVARTKKELLDALTPLHTQQRSIGLVPTMGALHSGHASLVAKAREENDVVVTSIFVNPLQFEALGDCDDYRNYPRQLDADVALLEAEGVDVVFAPDVEEMYGPTGLPMLWVRTGEMGERLEGASRPGHFDGVATVVAKLFNLVRPDRAYFGQKDAQQVAVIRRLVRDLDFPLEIRAVPIIRAADGLAESSRNQRLSGADRAAALVLPRVLFDLEERAATGQPLDIEGARAQLRAAQGVRLDHLELVDAATLEPLTVTGALDRPALVVAAIHVGQVRLIDNIELTPR</sequence>
<name>PANC_COREF</name>
<organism>
    <name type="scientific">Corynebacterium efficiens (strain DSM 44549 / YS-314 / AJ 12310 / JCM 11189 / NBRC 100395)</name>
    <dbReference type="NCBI Taxonomy" id="196164"/>
    <lineage>
        <taxon>Bacteria</taxon>
        <taxon>Bacillati</taxon>
        <taxon>Actinomycetota</taxon>
        <taxon>Actinomycetes</taxon>
        <taxon>Mycobacteriales</taxon>
        <taxon>Corynebacteriaceae</taxon>
        <taxon>Corynebacterium</taxon>
    </lineage>
</organism>
<dbReference type="EC" id="6.3.2.1" evidence="1"/>
<dbReference type="EMBL" id="BA000035">
    <property type="protein sequence ID" value="BAC16925.1"/>
    <property type="status" value="ALT_INIT"/>
    <property type="molecule type" value="Genomic_DNA"/>
</dbReference>
<dbReference type="RefSeq" id="WP_006768578.1">
    <property type="nucleotide sequence ID" value="NC_004369.1"/>
</dbReference>
<dbReference type="SMR" id="Q8FUA6"/>
<dbReference type="STRING" id="196164.gene:10740505"/>
<dbReference type="KEGG" id="cef:CE0115"/>
<dbReference type="eggNOG" id="COG0414">
    <property type="taxonomic scope" value="Bacteria"/>
</dbReference>
<dbReference type="HOGENOM" id="CLU_047148_0_2_11"/>
<dbReference type="OrthoDB" id="9773087at2"/>
<dbReference type="UniPathway" id="UPA00028">
    <property type="reaction ID" value="UER00005"/>
</dbReference>
<dbReference type="Proteomes" id="UP000001409">
    <property type="component" value="Chromosome"/>
</dbReference>
<dbReference type="GO" id="GO:0005829">
    <property type="term" value="C:cytosol"/>
    <property type="evidence" value="ECO:0007669"/>
    <property type="project" value="TreeGrafter"/>
</dbReference>
<dbReference type="GO" id="GO:0005524">
    <property type="term" value="F:ATP binding"/>
    <property type="evidence" value="ECO:0007669"/>
    <property type="project" value="UniProtKB-KW"/>
</dbReference>
<dbReference type="GO" id="GO:0004592">
    <property type="term" value="F:pantoate-beta-alanine ligase activity"/>
    <property type="evidence" value="ECO:0007669"/>
    <property type="project" value="UniProtKB-UniRule"/>
</dbReference>
<dbReference type="GO" id="GO:0015940">
    <property type="term" value="P:pantothenate biosynthetic process"/>
    <property type="evidence" value="ECO:0007669"/>
    <property type="project" value="UniProtKB-UniRule"/>
</dbReference>
<dbReference type="CDD" id="cd00560">
    <property type="entry name" value="PanC"/>
    <property type="match status" value="1"/>
</dbReference>
<dbReference type="FunFam" id="3.40.50.620:FF:000114">
    <property type="entry name" value="Pantothenate synthetase"/>
    <property type="match status" value="1"/>
</dbReference>
<dbReference type="Gene3D" id="3.40.50.620">
    <property type="entry name" value="HUPs"/>
    <property type="match status" value="1"/>
</dbReference>
<dbReference type="Gene3D" id="3.30.1300.10">
    <property type="entry name" value="Pantoate-beta-alanine ligase, C-terminal domain"/>
    <property type="match status" value="1"/>
</dbReference>
<dbReference type="HAMAP" id="MF_00158">
    <property type="entry name" value="PanC"/>
    <property type="match status" value="1"/>
</dbReference>
<dbReference type="InterPro" id="IPR003721">
    <property type="entry name" value="Pantoate_ligase"/>
</dbReference>
<dbReference type="InterPro" id="IPR042176">
    <property type="entry name" value="Pantoate_ligase_C"/>
</dbReference>
<dbReference type="InterPro" id="IPR014729">
    <property type="entry name" value="Rossmann-like_a/b/a_fold"/>
</dbReference>
<dbReference type="NCBIfam" id="TIGR00018">
    <property type="entry name" value="panC"/>
    <property type="match status" value="1"/>
</dbReference>
<dbReference type="PANTHER" id="PTHR21299">
    <property type="entry name" value="CYTIDYLATE KINASE/PANTOATE-BETA-ALANINE LIGASE"/>
    <property type="match status" value="1"/>
</dbReference>
<dbReference type="PANTHER" id="PTHR21299:SF1">
    <property type="entry name" value="PANTOATE--BETA-ALANINE LIGASE"/>
    <property type="match status" value="1"/>
</dbReference>
<dbReference type="Pfam" id="PF02569">
    <property type="entry name" value="Pantoate_ligase"/>
    <property type="match status" value="1"/>
</dbReference>
<dbReference type="SUPFAM" id="SSF52374">
    <property type="entry name" value="Nucleotidylyl transferase"/>
    <property type="match status" value="1"/>
</dbReference>
<reference key="1">
    <citation type="journal article" date="2003" name="Genome Res.">
        <title>Comparative complete genome sequence analysis of the amino acid replacements responsible for the thermostability of Corynebacterium efficiens.</title>
        <authorList>
            <person name="Nishio Y."/>
            <person name="Nakamura Y."/>
            <person name="Kawarabayasi Y."/>
            <person name="Usuda Y."/>
            <person name="Kimura E."/>
            <person name="Sugimoto S."/>
            <person name="Matsui K."/>
            <person name="Yamagishi A."/>
            <person name="Kikuchi H."/>
            <person name="Ikeo K."/>
            <person name="Gojobori T."/>
        </authorList>
    </citation>
    <scope>NUCLEOTIDE SEQUENCE [LARGE SCALE GENOMIC DNA]</scope>
    <source>
        <strain>DSM 44549 / YS-314 / AJ 12310 / JCM 11189 / NBRC 100395</strain>
    </source>
</reference>